<gene>
    <name evidence="3" type="ORF">phi32_11</name>
</gene>
<organismHost>
    <name type="scientific">Escherichia coli</name>
    <dbReference type="NCBI Taxonomy" id="562"/>
</organismHost>
<evidence type="ECO:0000269" key="1">
    <source>
    </source>
</evidence>
<evidence type="ECO:0000305" key="2"/>
<evidence type="ECO:0000312" key="3">
    <source>
        <dbReference type="EMBL" id="ABY52812.1"/>
    </source>
</evidence>
<evidence type="ECO:0000312" key="4">
    <source>
        <dbReference type="Proteomes" id="UP000002006"/>
    </source>
</evidence>
<comment type="function">
    <text evidence="2">Assembles to form a prolate capsid of about 145 nm x 44 nm.</text>
</comment>
<comment type="subcellular location">
    <subcellularLocation>
        <location evidence="1">Virion</location>
    </subcellularLocation>
</comment>
<reference key="1">
    <citation type="journal article" date="2008" name="J. Mol. Biol.">
        <title>Genomic and proteomic analysis of phiEco32, a novel Escherichia coli bacteriophage.</title>
        <authorList>
            <person name="Savalia D."/>
            <person name="Westblade L.F."/>
            <person name="Goel M."/>
            <person name="Florens L."/>
            <person name="Kemp P."/>
            <person name="Akulenko N."/>
            <person name="Pavlova O."/>
            <person name="Padovan J.C."/>
            <person name="Chait B.T."/>
            <person name="Washburn M.P."/>
            <person name="Ackermann H.W."/>
            <person name="Mushegian A."/>
            <person name="Gabisonia T."/>
            <person name="Molineux I."/>
            <person name="Severinov K."/>
        </authorList>
    </citation>
    <scope>NUCLEOTIDE SEQUENCE [LARGE SCALE GENOMIC DNA]</scope>
    <scope>SUBCELLULAR LOCATION</scope>
</reference>
<proteinExistence type="predicted"/>
<accession>B0FIH3</accession>
<feature type="chain" id="PRO_0000432919" description="Major capsid protein">
    <location>
        <begin position="1"/>
        <end position="352"/>
    </location>
</feature>
<organism evidence="4">
    <name type="scientific">Escherichia phage Phieco32</name>
    <name type="common">Escherichia coli phage phi32</name>
    <dbReference type="NCBI Taxonomy" id="2679905"/>
    <lineage>
        <taxon>Viruses</taxon>
        <taxon>Duplodnaviria</taxon>
        <taxon>Heunggongvirae</taxon>
        <taxon>Uroviricota</taxon>
        <taxon>Caudoviricetes</taxon>
        <taxon>Gordonclarkvirinae</taxon>
        <taxon>Kuravirus</taxon>
        <taxon>Kuravirus phiEco32</taxon>
    </lineage>
</organism>
<dbReference type="EMBL" id="EU330206">
    <property type="protein sequence ID" value="ABY52812.1"/>
    <property type="molecule type" value="Genomic_DNA"/>
</dbReference>
<dbReference type="RefSeq" id="YP_001671756.1">
    <property type="nucleotide sequence ID" value="NC_010324.1"/>
</dbReference>
<dbReference type="SMR" id="B0FIH3"/>
<dbReference type="GeneID" id="5896916"/>
<dbReference type="KEGG" id="vg:5896916"/>
<dbReference type="Proteomes" id="UP000002006">
    <property type="component" value="Genome"/>
</dbReference>
<dbReference type="GO" id="GO:0019028">
    <property type="term" value="C:viral capsid"/>
    <property type="evidence" value="ECO:0007669"/>
    <property type="project" value="UniProtKB-KW"/>
</dbReference>
<dbReference type="InterPro" id="IPR035198">
    <property type="entry name" value="SU10_MCP"/>
</dbReference>
<dbReference type="Pfam" id="PF17236">
    <property type="entry name" value="SU10_MCP"/>
    <property type="match status" value="1"/>
</dbReference>
<protein>
    <recommendedName>
        <fullName evidence="2">Major capsid protein</fullName>
    </recommendedName>
    <alternativeName>
        <fullName evidence="2">Gene product 11</fullName>
        <shortName>gp11</shortName>
    </alternativeName>
    <alternativeName>
        <fullName evidence="2">Major head protein</fullName>
    </alternativeName>
</protein>
<name>CAPSD_BPE32</name>
<sequence length="352" mass="38659">MANPTLFVSYDQNGKKLSFANWISVLSPQDTPFVSMTGKESINQTIFSWQTDALASVDGNNAHVEGSRAEDGEMKPTVIKSNVTQILRKVVRVSDTANTTANYGRGRELMYQLEKKGKEIKRDLEKILLSGQARTDVLADQYLTNSATDPAVVGLNDTHAARKTGAFQFLCAHGGLAGGVVDKTKNGPADPDTGAVTVKVAQNASNPTTNIGFDEADIFDMTLQLYTAGSEADIIMINPAHAKIFAGLQENTQGSRKRIFENTKQFIYEVNSITDPLGQSYKIIVNRWMPTDAVYFFRSADWTQMVLRAPKRTELAKDGSYEKWMIEMEVGLRHRNPYASGVLFTAAGKVAA</sequence>
<keyword id="KW-0167">Capsid protein</keyword>
<keyword id="KW-0426">Late protein</keyword>
<keyword id="KW-1185">Reference proteome</keyword>
<keyword id="KW-0946">Virion</keyword>